<proteinExistence type="inferred from homology"/>
<gene>
    <name type="ordered locus">ASA_3749</name>
</gene>
<name>Y3749_AERS4</name>
<organism>
    <name type="scientific">Aeromonas salmonicida (strain A449)</name>
    <dbReference type="NCBI Taxonomy" id="382245"/>
    <lineage>
        <taxon>Bacteria</taxon>
        <taxon>Pseudomonadati</taxon>
        <taxon>Pseudomonadota</taxon>
        <taxon>Gammaproteobacteria</taxon>
        <taxon>Aeromonadales</taxon>
        <taxon>Aeromonadaceae</taxon>
        <taxon>Aeromonas</taxon>
    </lineage>
</organism>
<accession>A4SS38</accession>
<reference key="1">
    <citation type="journal article" date="2008" name="BMC Genomics">
        <title>The genome of Aeromonas salmonicida subsp. salmonicida A449: insights into the evolution of a fish pathogen.</title>
        <authorList>
            <person name="Reith M.E."/>
            <person name="Singh R.K."/>
            <person name="Curtis B."/>
            <person name="Boyd J.M."/>
            <person name="Bouevitch A."/>
            <person name="Kimball J."/>
            <person name="Munholland J."/>
            <person name="Murphy C."/>
            <person name="Sarty D."/>
            <person name="Williams J."/>
            <person name="Nash J.H."/>
            <person name="Johnson S.C."/>
            <person name="Brown L.L."/>
        </authorList>
    </citation>
    <scope>NUCLEOTIDE SEQUENCE [LARGE SCALE GENOMIC DNA]</scope>
    <source>
        <strain>A449</strain>
    </source>
</reference>
<sequence length="150" mass="16372">MPIWVDADACPLPVKEILYRAAHRAQVVTTLVANQGLRVPPSPYIKTQQVEKGFDVADHVIAQQVIPGDLVITGDIPLASWVIDAGGEALNPRGEIYTRETIQARLGMRNFMEELRSAGVQTGGPAPFNAADKQRFANALDKWLLKGKLS</sequence>
<comment type="similarity">
    <text evidence="1">Belongs to the UPF0178 family.</text>
</comment>
<protein>
    <recommendedName>
        <fullName evidence="1">UPF0178 protein ASA_3749</fullName>
    </recommendedName>
</protein>
<feature type="chain" id="PRO_1000014408" description="UPF0178 protein ASA_3749">
    <location>
        <begin position="1"/>
        <end position="150"/>
    </location>
</feature>
<dbReference type="EMBL" id="CP000644">
    <property type="protein sequence ID" value="ABO91710.1"/>
    <property type="molecule type" value="Genomic_DNA"/>
</dbReference>
<dbReference type="RefSeq" id="WP_005315979.1">
    <property type="nucleotide sequence ID" value="NC_009348.1"/>
</dbReference>
<dbReference type="SMR" id="A4SS38"/>
<dbReference type="STRING" id="29491.GCA_000820065_04258"/>
<dbReference type="KEGG" id="asa:ASA_3749"/>
<dbReference type="eggNOG" id="COG1671">
    <property type="taxonomic scope" value="Bacteria"/>
</dbReference>
<dbReference type="HOGENOM" id="CLU_106619_2_1_6"/>
<dbReference type="Proteomes" id="UP000000225">
    <property type="component" value="Chromosome"/>
</dbReference>
<dbReference type="CDD" id="cd18720">
    <property type="entry name" value="PIN_YqxD-like"/>
    <property type="match status" value="1"/>
</dbReference>
<dbReference type="HAMAP" id="MF_00489">
    <property type="entry name" value="UPF0178"/>
    <property type="match status" value="1"/>
</dbReference>
<dbReference type="InterPro" id="IPR003791">
    <property type="entry name" value="UPF0178"/>
</dbReference>
<dbReference type="NCBIfam" id="NF001095">
    <property type="entry name" value="PRK00124.1"/>
    <property type="match status" value="1"/>
</dbReference>
<dbReference type="PANTHER" id="PTHR35146">
    <property type="entry name" value="UPF0178 PROTEIN YAII"/>
    <property type="match status" value="1"/>
</dbReference>
<dbReference type="PANTHER" id="PTHR35146:SF1">
    <property type="entry name" value="UPF0178 PROTEIN YAII"/>
    <property type="match status" value="1"/>
</dbReference>
<dbReference type="Pfam" id="PF02639">
    <property type="entry name" value="DUF188"/>
    <property type="match status" value="1"/>
</dbReference>
<evidence type="ECO:0000255" key="1">
    <source>
        <dbReference type="HAMAP-Rule" id="MF_00489"/>
    </source>
</evidence>